<keyword id="KW-0007">Acetylation</keyword>
<keyword id="KW-0113">Calvin cycle</keyword>
<keyword id="KW-0120">Carbon dioxide fixation</keyword>
<keyword id="KW-0150">Chloroplast</keyword>
<keyword id="KW-1015">Disulfide bond</keyword>
<keyword id="KW-0456">Lyase</keyword>
<keyword id="KW-0460">Magnesium</keyword>
<keyword id="KW-0479">Metal-binding</keyword>
<keyword id="KW-0488">Methylation</keyword>
<keyword id="KW-0503">Monooxygenase</keyword>
<keyword id="KW-0560">Oxidoreductase</keyword>
<keyword id="KW-0601">Photorespiration</keyword>
<keyword id="KW-0602">Photosynthesis</keyword>
<keyword id="KW-0934">Plastid</keyword>
<name>RBL_TUPAK</name>
<organism>
    <name type="scientific">Tupiella akineta</name>
    <name type="common">Green alga</name>
    <name type="synonym">Pseudendoclonium akinetum</name>
    <dbReference type="NCBI Taxonomy" id="160070"/>
    <lineage>
        <taxon>Eukaryota</taxon>
        <taxon>Viridiplantae</taxon>
        <taxon>Chlorophyta</taxon>
        <taxon>Ulvophyceae</taxon>
        <taxon>OUU clade</taxon>
        <taxon>Ulotrichales</taxon>
        <taxon>Tupiellaceae</taxon>
        <taxon>Tupiella</taxon>
    </lineage>
</organism>
<reference key="1">
    <citation type="journal article" date="2005" name="Mol. Biol. Evol.">
        <title>The chloroplast genome sequence of the green alga Pseudendoclonium akinetum (Ulvophyceae) reveals unusual structural features and new insights into the branching order of chlorophyte lineages.</title>
        <authorList>
            <person name="Pombert J.-F."/>
            <person name="Otis C."/>
            <person name="Lemieux C."/>
            <person name="Turmel M."/>
        </authorList>
    </citation>
    <scope>NUCLEOTIDE SEQUENCE [LARGE SCALE GENOMIC DNA]</scope>
    <source>
        <strain>UTEX 1912</strain>
    </source>
</reference>
<proteinExistence type="inferred from homology"/>
<geneLocation type="chloroplast"/>
<gene>
    <name evidence="1" type="primary">rbcL</name>
</gene>
<accession>Q3ZJ74</accession>
<protein>
    <recommendedName>
        <fullName evidence="1">Ribulose bisphosphate carboxylase large chain</fullName>
        <shortName evidence="1">RuBisCO large subunit</shortName>
        <ecNumber evidence="1">4.1.1.39</ecNumber>
    </recommendedName>
</protein>
<evidence type="ECO:0000255" key="1">
    <source>
        <dbReference type="HAMAP-Rule" id="MF_01338"/>
    </source>
</evidence>
<evidence type="ECO:0000305" key="2"/>
<feature type="propeptide" id="PRO_0000251434" evidence="1">
    <location>
        <begin position="1"/>
        <end position="2"/>
    </location>
</feature>
<feature type="chain" id="PRO_0000251435" description="Ribulose bisphosphate carboxylase large chain">
    <location>
        <begin position="3"/>
        <end position="475"/>
    </location>
</feature>
<feature type="active site" description="Proton acceptor" evidence="1">
    <location>
        <position position="175"/>
    </location>
</feature>
<feature type="active site" description="Proton acceptor" evidence="1">
    <location>
        <position position="294"/>
    </location>
</feature>
<feature type="binding site" description="in homodimeric partner" evidence="1">
    <location>
        <position position="123"/>
    </location>
    <ligand>
        <name>substrate</name>
    </ligand>
</feature>
<feature type="binding site" evidence="1">
    <location>
        <position position="173"/>
    </location>
    <ligand>
        <name>substrate</name>
    </ligand>
</feature>
<feature type="binding site" evidence="1">
    <location>
        <position position="177"/>
    </location>
    <ligand>
        <name>substrate</name>
    </ligand>
</feature>
<feature type="binding site" description="via carbamate group" evidence="1">
    <location>
        <position position="201"/>
    </location>
    <ligand>
        <name>Mg(2+)</name>
        <dbReference type="ChEBI" id="CHEBI:18420"/>
    </ligand>
</feature>
<feature type="binding site" evidence="1">
    <location>
        <position position="203"/>
    </location>
    <ligand>
        <name>Mg(2+)</name>
        <dbReference type="ChEBI" id="CHEBI:18420"/>
    </ligand>
</feature>
<feature type="binding site" evidence="1">
    <location>
        <position position="204"/>
    </location>
    <ligand>
        <name>Mg(2+)</name>
        <dbReference type="ChEBI" id="CHEBI:18420"/>
    </ligand>
</feature>
<feature type="binding site" evidence="1">
    <location>
        <position position="295"/>
    </location>
    <ligand>
        <name>substrate</name>
    </ligand>
</feature>
<feature type="binding site" evidence="1">
    <location>
        <position position="327"/>
    </location>
    <ligand>
        <name>substrate</name>
    </ligand>
</feature>
<feature type="binding site" evidence="1">
    <location>
        <position position="379"/>
    </location>
    <ligand>
        <name>substrate</name>
    </ligand>
</feature>
<feature type="site" description="Transition state stabilizer" evidence="1">
    <location>
        <position position="334"/>
    </location>
</feature>
<feature type="modified residue" description="N-acetylproline" evidence="1">
    <location>
        <position position="3"/>
    </location>
</feature>
<feature type="modified residue" description="N6,N6,N6-trimethyllysine" evidence="1">
    <location>
        <position position="14"/>
    </location>
</feature>
<feature type="modified residue" description="N6-carboxylysine" evidence="1">
    <location>
        <position position="201"/>
    </location>
</feature>
<feature type="disulfide bond" description="Interchain; in linked form" evidence="1">
    <location>
        <position position="247"/>
    </location>
</feature>
<comment type="function">
    <text evidence="1">RuBisCO catalyzes two reactions: the carboxylation of D-ribulose 1,5-bisphosphate, the primary event in carbon dioxide fixation, as well as the oxidative fragmentation of the pentose substrate in the photorespiration process. Both reactions occur simultaneously and in competition at the same active site.</text>
</comment>
<comment type="catalytic activity">
    <reaction evidence="1">
        <text>2 (2R)-3-phosphoglycerate + 2 H(+) = D-ribulose 1,5-bisphosphate + CO2 + H2O</text>
        <dbReference type="Rhea" id="RHEA:23124"/>
        <dbReference type="ChEBI" id="CHEBI:15377"/>
        <dbReference type="ChEBI" id="CHEBI:15378"/>
        <dbReference type="ChEBI" id="CHEBI:16526"/>
        <dbReference type="ChEBI" id="CHEBI:57870"/>
        <dbReference type="ChEBI" id="CHEBI:58272"/>
        <dbReference type="EC" id="4.1.1.39"/>
    </reaction>
</comment>
<comment type="catalytic activity">
    <reaction evidence="1">
        <text>D-ribulose 1,5-bisphosphate + O2 = 2-phosphoglycolate + (2R)-3-phosphoglycerate + 2 H(+)</text>
        <dbReference type="Rhea" id="RHEA:36631"/>
        <dbReference type="ChEBI" id="CHEBI:15378"/>
        <dbReference type="ChEBI" id="CHEBI:15379"/>
        <dbReference type="ChEBI" id="CHEBI:57870"/>
        <dbReference type="ChEBI" id="CHEBI:58033"/>
        <dbReference type="ChEBI" id="CHEBI:58272"/>
    </reaction>
</comment>
<comment type="cofactor">
    <cofactor evidence="1">
        <name>Mg(2+)</name>
        <dbReference type="ChEBI" id="CHEBI:18420"/>
    </cofactor>
    <text evidence="1">Binds 1 Mg(2+) ion per subunit.</text>
</comment>
<comment type="subunit">
    <text evidence="1">Heterohexadecamer of 8 large chains and 8 small chains; disulfide-linked. The disulfide link is formed within the large subunit homodimers.</text>
</comment>
<comment type="subcellular location">
    <subcellularLocation>
        <location>Plastid</location>
        <location>Chloroplast</location>
    </subcellularLocation>
</comment>
<comment type="PTM">
    <text evidence="1">The disulfide bond which can form in the large chain dimeric partners within the hexadecamer appears to be associated with oxidative stress and protein turnover.</text>
</comment>
<comment type="miscellaneous">
    <text evidence="1">The basic functional RuBisCO is composed of a large chain homodimer in a 'head-to-tail' conformation. In form I RuBisCO this homodimer is arranged in a barrel-like tetramer with the small subunits forming a tetrameric 'cap' on each end of the 'barrel'.</text>
</comment>
<comment type="similarity">
    <text evidence="1">Belongs to the RuBisCO large chain family. Type I subfamily.</text>
</comment>
<comment type="sequence caution" evidence="2">
    <conflict type="erroneous initiation">
        <sequence resource="EMBL-CDS" id="AAV80617"/>
    </conflict>
</comment>
<dbReference type="EC" id="4.1.1.39" evidence="1"/>
<dbReference type="EMBL" id="AY835431">
    <property type="protein sequence ID" value="AAV80617.1"/>
    <property type="status" value="ALT_INIT"/>
    <property type="molecule type" value="Genomic_DNA"/>
</dbReference>
<dbReference type="RefSeq" id="YP_636193.2">
    <property type="nucleotide sequence ID" value="NC_008114.1"/>
</dbReference>
<dbReference type="SMR" id="Q3ZJ74"/>
<dbReference type="GeneID" id="4108797"/>
<dbReference type="GO" id="GO:0009507">
    <property type="term" value="C:chloroplast"/>
    <property type="evidence" value="ECO:0007669"/>
    <property type="project" value="UniProtKB-SubCell"/>
</dbReference>
<dbReference type="GO" id="GO:0000287">
    <property type="term" value="F:magnesium ion binding"/>
    <property type="evidence" value="ECO:0007669"/>
    <property type="project" value="UniProtKB-UniRule"/>
</dbReference>
<dbReference type="GO" id="GO:0004497">
    <property type="term" value="F:monooxygenase activity"/>
    <property type="evidence" value="ECO:0007669"/>
    <property type="project" value="UniProtKB-KW"/>
</dbReference>
<dbReference type="GO" id="GO:0016984">
    <property type="term" value="F:ribulose-bisphosphate carboxylase activity"/>
    <property type="evidence" value="ECO:0007669"/>
    <property type="project" value="UniProtKB-UniRule"/>
</dbReference>
<dbReference type="GO" id="GO:0009853">
    <property type="term" value="P:photorespiration"/>
    <property type="evidence" value="ECO:0007669"/>
    <property type="project" value="UniProtKB-KW"/>
</dbReference>
<dbReference type="GO" id="GO:0019253">
    <property type="term" value="P:reductive pentose-phosphate cycle"/>
    <property type="evidence" value="ECO:0007669"/>
    <property type="project" value="UniProtKB-UniRule"/>
</dbReference>
<dbReference type="CDD" id="cd08212">
    <property type="entry name" value="RuBisCO_large_I"/>
    <property type="match status" value="1"/>
</dbReference>
<dbReference type="FunFam" id="3.30.70.150:FF:000001">
    <property type="entry name" value="Ribulose bisphosphate carboxylase large chain"/>
    <property type="match status" value="1"/>
</dbReference>
<dbReference type="Gene3D" id="3.20.20.110">
    <property type="entry name" value="Ribulose bisphosphate carboxylase, large subunit, C-terminal domain"/>
    <property type="match status" value="1"/>
</dbReference>
<dbReference type="Gene3D" id="3.30.70.150">
    <property type="entry name" value="RuBisCO large subunit, N-terminal domain"/>
    <property type="match status" value="1"/>
</dbReference>
<dbReference type="HAMAP" id="MF_01338">
    <property type="entry name" value="RuBisCO_L_type1"/>
    <property type="match status" value="1"/>
</dbReference>
<dbReference type="InterPro" id="IPR033966">
    <property type="entry name" value="RuBisCO"/>
</dbReference>
<dbReference type="InterPro" id="IPR020878">
    <property type="entry name" value="RuBisCo_large_chain_AS"/>
</dbReference>
<dbReference type="InterPro" id="IPR000685">
    <property type="entry name" value="RuBisCO_lsu_C"/>
</dbReference>
<dbReference type="InterPro" id="IPR036376">
    <property type="entry name" value="RuBisCO_lsu_C_sf"/>
</dbReference>
<dbReference type="InterPro" id="IPR017443">
    <property type="entry name" value="RuBisCO_lsu_fd_N"/>
</dbReference>
<dbReference type="InterPro" id="IPR036422">
    <property type="entry name" value="RuBisCO_lsu_N_sf"/>
</dbReference>
<dbReference type="InterPro" id="IPR020888">
    <property type="entry name" value="RuBisCO_lsuI"/>
</dbReference>
<dbReference type="NCBIfam" id="NF003252">
    <property type="entry name" value="PRK04208.1"/>
    <property type="match status" value="1"/>
</dbReference>
<dbReference type="PANTHER" id="PTHR42704">
    <property type="entry name" value="RIBULOSE BISPHOSPHATE CARBOXYLASE"/>
    <property type="match status" value="1"/>
</dbReference>
<dbReference type="PANTHER" id="PTHR42704:SF17">
    <property type="entry name" value="RIBULOSE BISPHOSPHATE CARBOXYLASE LARGE CHAIN"/>
    <property type="match status" value="1"/>
</dbReference>
<dbReference type="Pfam" id="PF00016">
    <property type="entry name" value="RuBisCO_large"/>
    <property type="match status" value="1"/>
</dbReference>
<dbReference type="Pfam" id="PF02788">
    <property type="entry name" value="RuBisCO_large_N"/>
    <property type="match status" value="1"/>
</dbReference>
<dbReference type="SFLD" id="SFLDG01052">
    <property type="entry name" value="RuBisCO"/>
    <property type="match status" value="1"/>
</dbReference>
<dbReference type="SFLD" id="SFLDS00014">
    <property type="entry name" value="RuBisCO"/>
    <property type="match status" value="1"/>
</dbReference>
<dbReference type="SFLD" id="SFLDG00301">
    <property type="entry name" value="RuBisCO-like_proteins"/>
    <property type="match status" value="1"/>
</dbReference>
<dbReference type="SUPFAM" id="SSF51649">
    <property type="entry name" value="RuBisCo, C-terminal domain"/>
    <property type="match status" value="1"/>
</dbReference>
<dbReference type="SUPFAM" id="SSF54966">
    <property type="entry name" value="RuBisCO, large subunit, small (N-terminal) domain"/>
    <property type="match status" value="1"/>
</dbReference>
<dbReference type="PROSITE" id="PS00157">
    <property type="entry name" value="RUBISCO_LARGE"/>
    <property type="match status" value="1"/>
</dbReference>
<sequence length="475" mass="52428">MAPQTETKAGTGFKAGVKDYRLTYYTPDYQVKDTDILAAFRMTPQPGVPVEEAGAAVAAESSTGTWTTVWTDGLTSLDRYKGRCYDIEPVPGEDNQYIAYIAYPLDLFEEGSVTNLFTSIVGNVFGFKALRALRLEDLRIPPAYTKTFQGPPHGIQVERDKLNKYGRGLLGCTIKPKLGLSAKNYGRAVYECLRGGLDFTKDDENVTSQPFMRWRDRFLFCAEAIYKSQAETGEVKGHYLNSTAGTCESMMDRAQFAKDLGVPIVMHDYLTGGLTANTSLAIYCRNNGLLLHIHRAMHAVIDRQRNHGIHFRVLAKALRLSGGDHLHSGTVVGKLEGEREITLGFVDLMRDDYIEKDRSRGIYFTQDWASLPGTMPVASGGIHVWHMPALVDIFGDDACLQFGGGTLGHPWGNACGAAANRVALEACTQARNEGRDLAREGGDVIRAACKWSPELAAACEVWKEIKFEFDTVDKL</sequence>